<proteinExistence type="inferred from homology"/>
<keyword id="KW-0067">ATP-binding</keyword>
<keyword id="KW-0227">DNA damage</keyword>
<keyword id="KW-0233">DNA recombination</keyword>
<keyword id="KW-0238">DNA-binding</keyword>
<keyword id="KW-0547">Nucleotide-binding</keyword>
<keyword id="KW-1185">Reference proteome</keyword>
<protein>
    <recommendedName>
        <fullName evidence="1">DNA repair and recombination protein RadA</fullName>
    </recommendedName>
</protein>
<name>RADA_METLZ</name>
<gene>
    <name evidence="1" type="primary">radA</name>
    <name type="ordered locus">Mlab_0637</name>
</gene>
<dbReference type="EMBL" id="CP000559">
    <property type="protein sequence ID" value="ABN06810.1"/>
    <property type="molecule type" value="Genomic_DNA"/>
</dbReference>
<dbReference type="RefSeq" id="WP_011833011.1">
    <property type="nucleotide sequence ID" value="NC_008942.1"/>
</dbReference>
<dbReference type="SMR" id="A2SR54"/>
<dbReference type="STRING" id="410358.Mlab_0637"/>
<dbReference type="GeneID" id="4795970"/>
<dbReference type="KEGG" id="mla:Mlab_0637"/>
<dbReference type="eggNOG" id="arCOG00415">
    <property type="taxonomic scope" value="Archaea"/>
</dbReference>
<dbReference type="HOGENOM" id="CLU_041732_0_0_2"/>
<dbReference type="OrthoDB" id="31129at2157"/>
<dbReference type="Proteomes" id="UP000000365">
    <property type="component" value="Chromosome"/>
</dbReference>
<dbReference type="GO" id="GO:0005524">
    <property type="term" value="F:ATP binding"/>
    <property type="evidence" value="ECO:0007669"/>
    <property type="project" value="UniProtKB-UniRule"/>
</dbReference>
<dbReference type="GO" id="GO:0016887">
    <property type="term" value="F:ATP hydrolysis activity"/>
    <property type="evidence" value="ECO:0007669"/>
    <property type="project" value="InterPro"/>
</dbReference>
<dbReference type="GO" id="GO:0140664">
    <property type="term" value="F:ATP-dependent DNA damage sensor activity"/>
    <property type="evidence" value="ECO:0007669"/>
    <property type="project" value="InterPro"/>
</dbReference>
<dbReference type="GO" id="GO:0003684">
    <property type="term" value="F:damaged DNA binding"/>
    <property type="evidence" value="ECO:0007669"/>
    <property type="project" value="UniProtKB-UniRule"/>
</dbReference>
<dbReference type="GO" id="GO:0006310">
    <property type="term" value="P:DNA recombination"/>
    <property type="evidence" value="ECO:0007669"/>
    <property type="project" value="UniProtKB-UniRule"/>
</dbReference>
<dbReference type="GO" id="GO:0006281">
    <property type="term" value="P:DNA repair"/>
    <property type="evidence" value="ECO:0007669"/>
    <property type="project" value="UniProtKB-UniRule"/>
</dbReference>
<dbReference type="FunFam" id="3.40.50.300:FF:002052">
    <property type="entry name" value="DNA repair protein RAD51 homolog"/>
    <property type="match status" value="1"/>
</dbReference>
<dbReference type="Gene3D" id="1.10.150.20">
    <property type="entry name" value="5' to 3' exonuclease, C-terminal subdomain"/>
    <property type="match status" value="1"/>
</dbReference>
<dbReference type="Gene3D" id="3.40.50.300">
    <property type="entry name" value="P-loop containing nucleotide triphosphate hydrolases"/>
    <property type="match status" value="1"/>
</dbReference>
<dbReference type="HAMAP" id="MF_00348">
    <property type="entry name" value="RadA_arch"/>
    <property type="match status" value="1"/>
</dbReference>
<dbReference type="InterPro" id="IPR003593">
    <property type="entry name" value="AAA+_ATPase"/>
</dbReference>
<dbReference type="InterPro" id="IPR013632">
    <property type="entry name" value="DNA_recomb/repair_Rad51_C"/>
</dbReference>
<dbReference type="InterPro" id="IPR011938">
    <property type="entry name" value="DNA_recomb/repair_RadA"/>
</dbReference>
<dbReference type="InterPro" id="IPR016467">
    <property type="entry name" value="DNA_recomb/repair_RecA-like"/>
</dbReference>
<dbReference type="InterPro" id="IPR010995">
    <property type="entry name" value="DNA_repair_Rad51/TF_NusA_a-hlx"/>
</dbReference>
<dbReference type="InterPro" id="IPR027417">
    <property type="entry name" value="P-loop_NTPase"/>
</dbReference>
<dbReference type="InterPro" id="IPR020588">
    <property type="entry name" value="RecA_ATP-bd"/>
</dbReference>
<dbReference type="InterPro" id="IPR020587">
    <property type="entry name" value="RecA_monomer-monomer_interface"/>
</dbReference>
<dbReference type="NCBIfam" id="NF003301">
    <property type="entry name" value="PRK04301.1"/>
    <property type="match status" value="1"/>
</dbReference>
<dbReference type="NCBIfam" id="TIGR02236">
    <property type="entry name" value="recomb_radA"/>
    <property type="match status" value="1"/>
</dbReference>
<dbReference type="PANTHER" id="PTHR22942:SF30">
    <property type="entry name" value="MEIOTIC RECOMBINATION PROTEIN DMC1_LIM15 HOMOLOG"/>
    <property type="match status" value="1"/>
</dbReference>
<dbReference type="PANTHER" id="PTHR22942">
    <property type="entry name" value="RECA/RAD51/RADA DNA STRAND-PAIRING FAMILY MEMBER"/>
    <property type="match status" value="1"/>
</dbReference>
<dbReference type="Pfam" id="PF14520">
    <property type="entry name" value="HHH_5"/>
    <property type="match status" value="1"/>
</dbReference>
<dbReference type="Pfam" id="PF08423">
    <property type="entry name" value="Rad51"/>
    <property type="match status" value="1"/>
</dbReference>
<dbReference type="PIRSF" id="PIRSF005856">
    <property type="entry name" value="Rad51"/>
    <property type="match status" value="1"/>
</dbReference>
<dbReference type="SMART" id="SM00382">
    <property type="entry name" value="AAA"/>
    <property type="match status" value="1"/>
</dbReference>
<dbReference type="SUPFAM" id="SSF52540">
    <property type="entry name" value="P-loop containing nucleoside triphosphate hydrolases"/>
    <property type="match status" value="1"/>
</dbReference>
<dbReference type="SUPFAM" id="SSF47794">
    <property type="entry name" value="Rad51 N-terminal domain-like"/>
    <property type="match status" value="1"/>
</dbReference>
<dbReference type="PROSITE" id="PS50162">
    <property type="entry name" value="RECA_2"/>
    <property type="match status" value="1"/>
</dbReference>
<dbReference type="PROSITE" id="PS50163">
    <property type="entry name" value="RECA_3"/>
    <property type="match status" value="1"/>
</dbReference>
<reference key="1">
    <citation type="journal article" date="2009" name="Stand. Genomic Sci.">
        <title>Complete genome sequence of Methanocorpusculum labreanum type strain Z.</title>
        <authorList>
            <person name="Anderson I.J."/>
            <person name="Sieprawska-Lupa M."/>
            <person name="Goltsman E."/>
            <person name="Lapidus A."/>
            <person name="Copeland A."/>
            <person name="Glavina Del Rio T."/>
            <person name="Tice H."/>
            <person name="Dalin E."/>
            <person name="Barry K."/>
            <person name="Pitluck S."/>
            <person name="Hauser L."/>
            <person name="Land M."/>
            <person name="Lucas S."/>
            <person name="Richardson P."/>
            <person name="Whitman W.B."/>
            <person name="Kyrpides N.C."/>
        </authorList>
    </citation>
    <scope>NUCLEOTIDE SEQUENCE [LARGE SCALE GENOMIC DNA]</scope>
    <source>
        <strain>ATCC 43576 / DSM 4855 / Z</strain>
    </source>
</reference>
<evidence type="ECO:0000255" key="1">
    <source>
        <dbReference type="HAMAP-Rule" id="MF_00348"/>
    </source>
</evidence>
<organism>
    <name type="scientific">Methanocorpusculum labreanum (strain ATCC 43576 / DSM 4855 / Z)</name>
    <dbReference type="NCBI Taxonomy" id="410358"/>
    <lineage>
        <taxon>Archaea</taxon>
        <taxon>Methanobacteriati</taxon>
        <taxon>Methanobacteriota</taxon>
        <taxon>Stenosarchaea group</taxon>
        <taxon>Methanomicrobia</taxon>
        <taxon>Methanomicrobiales</taxon>
        <taxon>Methanocorpusculaceae</taxon>
        <taxon>Methanocorpusculum</taxon>
    </lineage>
</organism>
<accession>A2SR54</accession>
<comment type="function">
    <text evidence="1">Involved in DNA repair and in homologous recombination. Binds and assemble on single-stranded DNA to form a nucleoprotein filament. Hydrolyzes ATP in a ssDNA-dependent manner and promotes DNA strand exchange between homologous DNA molecules.</text>
</comment>
<comment type="similarity">
    <text evidence="1">Belongs to the eukaryotic RecA-like protein family.</text>
</comment>
<feature type="chain" id="PRO_1000120510" description="DNA repair and recombination protein RadA">
    <location>
        <begin position="1"/>
        <end position="329"/>
    </location>
</feature>
<feature type="binding site" evidence="1">
    <location>
        <begin position="107"/>
        <end position="114"/>
    </location>
    <ligand>
        <name>ATP</name>
        <dbReference type="ChEBI" id="CHEBI:30616"/>
    </ligand>
</feature>
<sequence length="329" mass="35402">MTALDIEEIPGVGPATADRLRDAGYITVESIATATPVDLAEAAELGESTTKKIIKAAREMADIGGFKTGTDILARRQDVLKLKTLVPEIDELFGGGLETQAITELYGEFGSGKSQIAHQLAVNCQLPQELGGLGGSCLYIDTENTFRPERIEQMAEGLELADLPEGYVVPTPDEFLANIHVARAHSSDHQMLLIDAARELSNELTASGLPVKLVIIDSLTSLFRSEYAGRGTLAGRQQKLNRHMHDLFKLVDDLNAVALVTNQVMANPGLLFGDPTKPIGGNIVGHTATYRVYLRKSKAGKRIARLVDSPNLPEGEATFMVETAGIKPC</sequence>